<protein>
    <recommendedName>
        <fullName evidence="1">7-cyano-7-deazaguanine synthase</fullName>
        <ecNumber evidence="1">6.3.4.20</ecNumber>
    </recommendedName>
    <alternativeName>
        <fullName evidence="1">7-cyano-7-carbaguanine synthase</fullName>
    </alternativeName>
    <alternativeName>
        <fullName evidence="1">PreQ(0) synthase</fullName>
    </alternativeName>
    <alternativeName>
        <fullName evidence="1">Queuosine biosynthesis protein QueC</fullName>
    </alternativeName>
</protein>
<evidence type="ECO:0000255" key="1">
    <source>
        <dbReference type="HAMAP-Rule" id="MF_01633"/>
    </source>
</evidence>
<keyword id="KW-0067">ATP-binding</keyword>
<keyword id="KW-0436">Ligase</keyword>
<keyword id="KW-0479">Metal-binding</keyword>
<keyword id="KW-0547">Nucleotide-binding</keyword>
<keyword id="KW-0671">Queuosine biosynthesis</keyword>
<keyword id="KW-0862">Zinc</keyword>
<reference key="1">
    <citation type="journal article" date="2005" name="J. Bacteriol.">
        <title>Whole-genome sequence analysis of Pseudomonas syringae pv. phaseolicola 1448A reveals divergence among pathovars in genes involved in virulence and transposition.</title>
        <authorList>
            <person name="Joardar V."/>
            <person name="Lindeberg M."/>
            <person name="Jackson R.W."/>
            <person name="Selengut J."/>
            <person name="Dodson R."/>
            <person name="Brinkac L.M."/>
            <person name="Daugherty S.C."/>
            <person name="DeBoy R.T."/>
            <person name="Durkin A.S."/>
            <person name="Gwinn Giglio M."/>
            <person name="Madupu R."/>
            <person name="Nelson W.C."/>
            <person name="Rosovitz M.J."/>
            <person name="Sullivan S.A."/>
            <person name="Crabtree J."/>
            <person name="Creasy T."/>
            <person name="Davidsen T.M."/>
            <person name="Haft D.H."/>
            <person name="Zafar N."/>
            <person name="Zhou L."/>
            <person name="Halpin R."/>
            <person name="Holley T."/>
            <person name="Khouri H.M."/>
            <person name="Feldblyum T.V."/>
            <person name="White O."/>
            <person name="Fraser C.M."/>
            <person name="Chatterjee A.K."/>
            <person name="Cartinhour S."/>
            <person name="Schneider D."/>
            <person name="Mansfield J.W."/>
            <person name="Collmer A."/>
            <person name="Buell R."/>
        </authorList>
    </citation>
    <scope>NUCLEOTIDE SEQUENCE [LARGE SCALE GENOMIC DNA]</scope>
    <source>
        <strain>1448A / Race 6</strain>
    </source>
</reference>
<name>QUEC_PSE14</name>
<gene>
    <name evidence="1" type="primary">queC</name>
    <name type="ordered locus">PSPPH_3763</name>
</gene>
<dbReference type="EC" id="6.3.4.20" evidence="1"/>
<dbReference type="EMBL" id="CP000058">
    <property type="protein sequence ID" value="AAZ35459.1"/>
    <property type="molecule type" value="Genomic_DNA"/>
</dbReference>
<dbReference type="RefSeq" id="WP_011169273.1">
    <property type="nucleotide sequence ID" value="NC_005773.3"/>
</dbReference>
<dbReference type="SMR" id="Q48FD4"/>
<dbReference type="KEGG" id="psp:PSPPH_3763"/>
<dbReference type="eggNOG" id="COG0603">
    <property type="taxonomic scope" value="Bacteria"/>
</dbReference>
<dbReference type="HOGENOM" id="CLU_081854_1_1_6"/>
<dbReference type="UniPathway" id="UPA00391"/>
<dbReference type="Proteomes" id="UP000000551">
    <property type="component" value="Chromosome"/>
</dbReference>
<dbReference type="GO" id="GO:0005524">
    <property type="term" value="F:ATP binding"/>
    <property type="evidence" value="ECO:0007669"/>
    <property type="project" value="UniProtKB-UniRule"/>
</dbReference>
<dbReference type="GO" id="GO:0016879">
    <property type="term" value="F:ligase activity, forming carbon-nitrogen bonds"/>
    <property type="evidence" value="ECO:0007669"/>
    <property type="project" value="UniProtKB-UniRule"/>
</dbReference>
<dbReference type="GO" id="GO:0008270">
    <property type="term" value="F:zinc ion binding"/>
    <property type="evidence" value="ECO:0007669"/>
    <property type="project" value="UniProtKB-UniRule"/>
</dbReference>
<dbReference type="GO" id="GO:0008616">
    <property type="term" value="P:queuosine biosynthetic process"/>
    <property type="evidence" value="ECO:0007669"/>
    <property type="project" value="UniProtKB-UniRule"/>
</dbReference>
<dbReference type="CDD" id="cd01995">
    <property type="entry name" value="QueC-like"/>
    <property type="match status" value="1"/>
</dbReference>
<dbReference type="FunFam" id="3.40.50.620:FF:000131">
    <property type="entry name" value="7-cyano-7-deazaguanine synthase"/>
    <property type="match status" value="1"/>
</dbReference>
<dbReference type="Gene3D" id="3.40.50.620">
    <property type="entry name" value="HUPs"/>
    <property type="match status" value="1"/>
</dbReference>
<dbReference type="HAMAP" id="MF_01633">
    <property type="entry name" value="QueC"/>
    <property type="match status" value="1"/>
</dbReference>
<dbReference type="InterPro" id="IPR018317">
    <property type="entry name" value="QueC"/>
</dbReference>
<dbReference type="InterPro" id="IPR014729">
    <property type="entry name" value="Rossmann-like_a/b/a_fold"/>
</dbReference>
<dbReference type="NCBIfam" id="TIGR00364">
    <property type="entry name" value="7-cyano-7-deazaguanine synthase QueC"/>
    <property type="match status" value="1"/>
</dbReference>
<dbReference type="PANTHER" id="PTHR42914">
    <property type="entry name" value="7-CYANO-7-DEAZAGUANINE SYNTHASE"/>
    <property type="match status" value="1"/>
</dbReference>
<dbReference type="PANTHER" id="PTHR42914:SF1">
    <property type="entry name" value="7-CYANO-7-DEAZAGUANINE SYNTHASE"/>
    <property type="match status" value="1"/>
</dbReference>
<dbReference type="Pfam" id="PF06508">
    <property type="entry name" value="QueC"/>
    <property type="match status" value="1"/>
</dbReference>
<dbReference type="PIRSF" id="PIRSF006293">
    <property type="entry name" value="ExsB"/>
    <property type="match status" value="1"/>
</dbReference>
<dbReference type="SUPFAM" id="SSF52402">
    <property type="entry name" value="Adenine nucleotide alpha hydrolases-like"/>
    <property type="match status" value="1"/>
</dbReference>
<sequence length="229" mass="24294">MSELTNTEKRAVILLSGGLDSATVVAMARAEGYACYTMSFDYGQRHRAELDAAARVARDLGAVEHKVIGLNLNGIGGSALTDSSIAVPESPSEGIPITYVPARNTVFLSLALGWAEVLGARDIFIGVNAVDYSGYPDCRPEFVESFERMANLATKAGVEGQGFTIRAPLQNLSKSDIVKAGAALGVDYSLTVSCYQADDQGRACGKCDSCRLRTEGFTAAGMADPTRYF</sequence>
<feature type="chain" id="PRO_0000246890" description="7-cyano-7-deazaguanine synthase">
    <location>
        <begin position="1"/>
        <end position="229"/>
    </location>
</feature>
<feature type="binding site" evidence="1">
    <location>
        <begin position="15"/>
        <end position="25"/>
    </location>
    <ligand>
        <name>ATP</name>
        <dbReference type="ChEBI" id="CHEBI:30616"/>
    </ligand>
</feature>
<feature type="binding site" evidence="1">
    <location>
        <position position="194"/>
    </location>
    <ligand>
        <name>Zn(2+)</name>
        <dbReference type="ChEBI" id="CHEBI:29105"/>
    </ligand>
</feature>
<feature type="binding site" evidence="1">
    <location>
        <position position="204"/>
    </location>
    <ligand>
        <name>Zn(2+)</name>
        <dbReference type="ChEBI" id="CHEBI:29105"/>
    </ligand>
</feature>
<feature type="binding site" evidence="1">
    <location>
        <position position="207"/>
    </location>
    <ligand>
        <name>Zn(2+)</name>
        <dbReference type="ChEBI" id="CHEBI:29105"/>
    </ligand>
</feature>
<feature type="binding site" evidence="1">
    <location>
        <position position="210"/>
    </location>
    <ligand>
        <name>Zn(2+)</name>
        <dbReference type="ChEBI" id="CHEBI:29105"/>
    </ligand>
</feature>
<comment type="function">
    <text evidence="1">Catalyzes the ATP-dependent conversion of 7-carboxy-7-deazaguanine (CDG) to 7-cyano-7-deazaguanine (preQ(0)).</text>
</comment>
<comment type="catalytic activity">
    <reaction evidence="1">
        <text>7-carboxy-7-deazaguanine + NH4(+) + ATP = 7-cyano-7-deazaguanine + ADP + phosphate + H2O + H(+)</text>
        <dbReference type="Rhea" id="RHEA:27982"/>
        <dbReference type="ChEBI" id="CHEBI:15377"/>
        <dbReference type="ChEBI" id="CHEBI:15378"/>
        <dbReference type="ChEBI" id="CHEBI:28938"/>
        <dbReference type="ChEBI" id="CHEBI:30616"/>
        <dbReference type="ChEBI" id="CHEBI:43474"/>
        <dbReference type="ChEBI" id="CHEBI:45075"/>
        <dbReference type="ChEBI" id="CHEBI:61036"/>
        <dbReference type="ChEBI" id="CHEBI:456216"/>
        <dbReference type="EC" id="6.3.4.20"/>
    </reaction>
</comment>
<comment type="cofactor">
    <cofactor evidence="1">
        <name>Zn(2+)</name>
        <dbReference type="ChEBI" id="CHEBI:29105"/>
    </cofactor>
    <text evidence="1">Binds 1 zinc ion per subunit.</text>
</comment>
<comment type="pathway">
    <text evidence="1">Purine metabolism; 7-cyano-7-deazaguanine biosynthesis.</text>
</comment>
<comment type="similarity">
    <text evidence="1">Belongs to the QueC family.</text>
</comment>
<accession>Q48FD4</accession>
<organism>
    <name type="scientific">Pseudomonas savastanoi pv. phaseolicola (strain 1448A / Race 6)</name>
    <name type="common">Pseudomonas syringae pv. phaseolicola (strain 1448A / Race 6)</name>
    <dbReference type="NCBI Taxonomy" id="264730"/>
    <lineage>
        <taxon>Bacteria</taxon>
        <taxon>Pseudomonadati</taxon>
        <taxon>Pseudomonadota</taxon>
        <taxon>Gammaproteobacteria</taxon>
        <taxon>Pseudomonadales</taxon>
        <taxon>Pseudomonadaceae</taxon>
        <taxon>Pseudomonas</taxon>
    </lineage>
</organism>
<proteinExistence type="inferred from homology"/>